<gene>
    <name type="primary">ycf38</name>
</gene>
<feature type="chain" id="PRO_0000277341" description="Putative transport permease ycf38">
    <location>
        <begin position="1"/>
        <end position="291"/>
    </location>
</feature>
<feature type="transmembrane region" description="Helical" evidence="1">
    <location>
        <begin position="47"/>
        <end position="67"/>
    </location>
</feature>
<feature type="transmembrane region" description="Helical" evidence="1">
    <location>
        <begin position="87"/>
        <end position="107"/>
    </location>
</feature>
<feature type="transmembrane region" description="Helical" evidence="1">
    <location>
        <begin position="135"/>
        <end position="155"/>
    </location>
</feature>
<feature type="transmembrane region" description="Helical" evidence="1">
    <location>
        <begin position="165"/>
        <end position="185"/>
    </location>
</feature>
<feature type="transmembrane region" description="Helical" evidence="1">
    <location>
        <begin position="195"/>
        <end position="215"/>
    </location>
</feature>
<feature type="transmembrane region" description="Helical" evidence="1">
    <location>
        <begin position="262"/>
        <end position="282"/>
    </location>
</feature>
<feature type="domain" description="ABC transmembrane type-2" evidence="2">
    <location>
        <begin position="47"/>
        <end position="289"/>
    </location>
</feature>
<accession>Q1XDG5</accession>
<sequence length="291" mass="32363">MISMLNQQVELKPILKFQITQIYSHSLIQEIKALITRLVLQVWRRPATLMAGIIQPLLWLILFGGLFYNAPINLFTINTSYNCFLSSGIIIFTSFTGALNSGLPLMFDREFGFLNRLLTAPLVSRTSIILSSATFMTCISLIQVVFIVTASLFMGNSPLNSDSTMIFGLMILLVTVGVTMLSLALSFTLPGHIELLAFILVVNLPFLFSSTALAPLYFMPPWLQLIASLNPLSYAIEGTRYLYSSVNWNFTECVIKISWGDICLGQIIILLIALDIMAAYLVSNILKAKLN</sequence>
<protein>
    <recommendedName>
        <fullName>Putative transport permease ycf38</fullName>
    </recommendedName>
</protein>
<evidence type="ECO:0000255" key="1"/>
<evidence type="ECO:0000255" key="2">
    <source>
        <dbReference type="PROSITE-ProRule" id="PRU00442"/>
    </source>
</evidence>
<evidence type="ECO:0000305" key="3"/>
<reference key="1">
    <citation type="submission" date="2003-11" db="EMBL/GenBank/DDBJ databases">
        <title>Whole genome sequence of Porphyra yezoensis chloroplast.</title>
        <authorList>
            <person name="Kunimoto M."/>
            <person name="Morishima K."/>
            <person name="Yoshikawa M."/>
            <person name="Fukuda S."/>
            <person name="Kobayashi T."/>
            <person name="Kobayashi M."/>
            <person name="Okazaki T."/>
            <person name="Ohara I."/>
            <person name="Nakayama I."/>
        </authorList>
    </citation>
    <scope>NUCLEOTIDE SEQUENCE [LARGE SCALE GENOMIC DNA]</scope>
    <source>
        <strain>U-51</strain>
    </source>
</reference>
<name>YCF38_PYRYE</name>
<proteinExistence type="inferred from homology"/>
<keyword id="KW-0150">Chloroplast</keyword>
<keyword id="KW-0472">Membrane</keyword>
<keyword id="KW-0934">Plastid</keyword>
<keyword id="KW-0812">Transmembrane</keyword>
<keyword id="KW-1133">Transmembrane helix</keyword>
<keyword id="KW-0813">Transport</keyword>
<geneLocation type="chloroplast"/>
<organism>
    <name type="scientific">Pyropia yezoensis</name>
    <name type="common">Susabi-nori</name>
    <name type="synonym">Porphyra yezoensis</name>
    <dbReference type="NCBI Taxonomy" id="2788"/>
    <lineage>
        <taxon>Eukaryota</taxon>
        <taxon>Rhodophyta</taxon>
        <taxon>Bangiophyceae</taxon>
        <taxon>Bangiales</taxon>
        <taxon>Bangiaceae</taxon>
        <taxon>Pyropia</taxon>
    </lineage>
</organism>
<dbReference type="EMBL" id="AP006715">
    <property type="protein sequence ID" value="BAE92446.1"/>
    <property type="molecule type" value="Genomic_DNA"/>
</dbReference>
<dbReference type="RefSeq" id="YP_537003.1">
    <property type="nucleotide sequence ID" value="NC_007932.1"/>
</dbReference>
<dbReference type="SMR" id="Q1XDG5"/>
<dbReference type="GO" id="GO:0043190">
    <property type="term" value="C:ATP-binding cassette (ABC) transporter complex"/>
    <property type="evidence" value="ECO:0007669"/>
    <property type="project" value="InterPro"/>
</dbReference>
<dbReference type="GO" id="GO:0031969">
    <property type="term" value="C:chloroplast membrane"/>
    <property type="evidence" value="ECO:0007669"/>
    <property type="project" value="UniProtKB-SubCell"/>
</dbReference>
<dbReference type="GO" id="GO:0140359">
    <property type="term" value="F:ABC-type transporter activity"/>
    <property type="evidence" value="ECO:0007669"/>
    <property type="project" value="InterPro"/>
</dbReference>
<dbReference type="InterPro" id="IPR013525">
    <property type="entry name" value="ABC2_TM"/>
</dbReference>
<dbReference type="InterPro" id="IPR047817">
    <property type="entry name" value="ABC2_TM_bact-type"/>
</dbReference>
<dbReference type="InterPro" id="IPR000412">
    <property type="entry name" value="ABC_2_transport"/>
</dbReference>
<dbReference type="InterPro" id="IPR051328">
    <property type="entry name" value="T7SS_ABC-Transporter"/>
</dbReference>
<dbReference type="PANTHER" id="PTHR43077:SF10">
    <property type="entry name" value="TRANSPORT PERMEASE PROTEIN"/>
    <property type="match status" value="1"/>
</dbReference>
<dbReference type="PANTHER" id="PTHR43077">
    <property type="entry name" value="TRANSPORT PERMEASE YVFS-RELATED"/>
    <property type="match status" value="1"/>
</dbReference>
<dbReference type="Pfam" id="PF01061">
    <property type="entry name" value="ABC2_membrane"/>
    <property type="match status" value="1"/>
</dbReference>
<dbReference type="PIRSF" id="PIRSF006648">
    <property type="entry name" value="DrrB"/>
    <property type="match status" value="1"/>
</dbReference>
<dbReference type="PROSITE" id="PS51012">
    <property type="entry name" value="ABC_TM2"/>
    <property type="match status" value="1"/>
</dbReference>
<comment type="subcellular location">
    <subcellularLocation>
        <location evidence="3">Plastid</location>
        <location evidence="3">Chloroplast membrane</location>
        <topology evidence="3">Multi-pass membrane protein</topology>
    </subcellularLocation>
</comment>
<comment type="similarity">
    <text evidence="3">Belongs to the ABC-2 integral membrane protein family.</text>
</comment>